<comment type="function">
    <text evidence="1">Plays a role in virus cell tropism, and may be required for efficient virus replication in macrophages.</text>
</comment>
<comment type="subcellular location">
    <subcellularLocation>
        <location evidence="3">Host membrane</location>
        <topology evidence="3">Multi-pass membrane protein</topology>
    </subcellularLocation>
</comment>
<comment type="similarity">
    <text evidence="3">Belongs to the asfivirus MGF 110 family.</text>
</comment>
<organism>
    <name type="scientific">African swine fever virus (isolate Warthog/Namibia/Wart80/1980)</name>
    <name type="common">ASFV</name>
    <dbReference type="NCBI Taxonomy" id="561444"/>
    <lineage>
        <taxon>Viruses</taxon>
        <taxon>Varidnaviria</taxon>
        <taxon>Bamfordvirae</taxon>
        <taxon>Nucleocytoviricota</taxon>
        <taxon>Pokkesviricetes</taxon>
        <taxon>Asfuvirales</taxon>
        <taxon>Asfarviridae</taxon>
        <taxon>Asfivirus</taxon>
        <taxon>African swine fever virus</taxon>
    </lineage>
</organism>
<dbReference type="EMBL" id="AY261366">
    <property type="status" value="NOT_ANNOTATED_CDS"/>
    <property type="molecule type" value="Genomic_DNA"/>
</dbReference>
<dbReference type="SMR" id="P0C9J2"/>
<dbReference type="Proteomes" id="UP000000858">
    <property type="component" value="Segment"/>
</dbReference>
<dbReference type="GO" id="GO:0033644">
    <property type="term" value="C:host cell membrane"/>
    <property type="evidence" value="ECO:0007669"/>
    <property type="project" value="UniProtKB-SubCell"/>
</dbReference>
<dbReference type="GO" id="GO:0016020">
    <property type="term" value="C:membrane"/>
    <property type="evidence" value="ECO:0007669"/>
    <property type="project" value="UniProtKB-KW"/>
</dbReference>
<proteinExistence type="inferred from homology"/>
<accession>P0C9J2</accession>
<protein>
    <recommendedName>
        <fullName>Protein MGF 110-11L</fullName>
    </recommendedName>
</protein>
<name>11011_ASFWA</name>
<evidence type="ECO:0000250" key="1"/>
<evidence type="ECO:0000255" key="2"/>
<evidence type="ECO:0000305" key="3"/>
<feature type="chain" id="PRO_0000373214" description="Protein MGF 110-11L">
    <location>
        <begin position="1"/>
        <end position="117"/>
    </location>
</feature>
<feature type="transmembrane region" description="Helical" evidence="2">
    <location>
        <begin position="3"/>
        <end position="23"/>
    </location>
</feature>
<feature type="transmembrane region" description="Helical" evidence="2">
    <location>
        <begin position="69"/>
        <end position="89"/>
    </location>
</feature>
<feature type="transmembrane region" description="Helical" evidence="2">
    <location>
        <begin position="94"/>
        <end position="114"/>
    </location>
</feature>
<feature type="glycosylation site" description="N-linked (GlcNAc...) asparagine; by host" evidence="2">
    <location>
        <position position="62"/>
    </location>
</feature>
<keyword id="KW-0325">Glycoprotein</keyword>
<keyword id="KW-1043">Host membrane</keyword>
<keyword id="KW-0472">Membrane</keyword>
<keyword id="KW-0812">Transmembrane</keyword>
<keyword id="KW-1133">Transmembrane helix</keyword>
<gene>
    <name type="ordered locus">War-021</name>
</gene>
<sequence length="117" mass="13899">MKVFLGLLLGYSTILILTYQSPATQWCFYEISLKIPNHHSMECSYPRLYKHFMFMKKWRDKNWSIIIRYYCFYLVFSFAFAGCIAFAICKNLRLCTTMKLLMLLSILVLLSQPILNN</sequence>
<organismHost>
    <name type="scientific">Ornithodoros</name>
    <name type="common">relapsing fever ticks</name>
    <dbReference type="NCBI Taxonomy" id="6937"/>
</organismHost>
<organismHost>
    <name type="scientific">Phacochoerus aethiopicus</name>
    <name type="common">Warthog</name>
    <dbReference type="NCBI Taxonomy" id="85517"/>
</organismHost>
<organismHost>
    <name type="scientific">Phacochoerus africanus</name>
    <name type="common">Warthog</name>
    <dbReference type="NCBI Taxonomy" id="41426"/>
</organismHost>
<organismHost>
    <name type="scientific">Potamochoerus larvatus</name>
    <name type="common">Bushpig</name>
    <dbReference type="NCBI Taxonomy" id="273792"/>
</organismHost>
<organismHost>
    <name type="scientific">Sus scrofa</name>
    <name type="common">Pig</name>
    <dbReference type="NCBI Taxonomy" id="9823"/>
</organismHost>
<reference key="1">
    <citation type="submission" date="2003-03" db="EMBL/GenBank/DDBJ databases">
        <title>African swine fever virus genomes.</title>
        <authorList>
            <person name="Kutish G.F."/>
            <person name="Rock D.L."/>
        </authorList>
    </citation>
    <scope>NUCLEOTIDE SEQUENCE [LARGE SCALE GENOMIC DNA]</scope>
</reference>